<proteinExistence type="evidence at protein level"/>
<gene>
    <name evidence="6" type="primary">pynB</name>
    <name type="ORF">An11g00350</name>
</gene>
<keyword id="KW-0274">FAD</keyword>
<keyword id="KW-0285">Flavoprotein</keyword>
<keyword id="KW-0325">Glycoprotein</keyword>
<keyword id="KW-0560">Oxidoreductase</keyword>
<keyword id="KW-1185">Reference proteome</keyword>
<keyword id="KW-0732">Signal</keyword>
<sequence length="541" mass="59245">MRLSARGFVWSALLACTASALSEAAATASNSSQTLRTCVSQALVAGDVNTRIIDPSNDTYTDARLGEKIQFNEFPALIAYAKKAEEVASLVRCAQRSGFKAVPRSGGHHFEAWSALNGTLVIDLSHINHVNVSADTTTANVGAGIRQGALYLALDEHNVTFPGGICPTVALGGLVSSGGFSLQMRALGLAAEYVQSARVVLADGSLVTASSSSHEDLFWAIRGGGGGTYGIIVDFDLQLMQFPTSAMVAISWNASSDRYPVAQRFFDWAPVQIPAFTSQVNVYKSSINFLGQYLGGTENELRKLINESGLLNIGTPTVYISGNCDTDNSRLFGYTSYECVPANETNRQIMNVLPEPFSQYSDYPQYQYENEPEDPSIPIAEPWARFNRISKSFFMQKDNILPAADLKTVIDMMGQLDTDSEIWGEWHAWNISSATKADYAFPWREQAYAHLEFQVHGSLTNSTKQATYEKWFADLETYLRPKIGVASYSGEMDAHISTNPFESYYGDSVCRLVEVKKAYDPDNFFTNPDAITPTVPEGISC</sequence>
<feature type="signal peptide" evidence="1">
    <location>
        <begin position="1"/>
        <end position="20"/>
    </location>
</feature>
<feature type="chain" id="PRO_5002678902" description="FAD-linked oxidoreductase pynB">
    <location>
        <begin position="21"/>
        <end position="541"/>
    </location>
</feature>
<feature type="domain" description="FAD-binding PCMH-type" evidence="3">
    <location>
        <begin position="71"/>
        <end position="242"/>
    </location>
</feature>
<feature type="glycosylation site" description="N-linked (GlcNAc...) asparagine" evidence="2">
    <location>
        <position position="30"/>
    </location>
</feature>
<feature type="glycosylation site" description="N-linked (GlcNAc...) asparagine" evidence="2">
    <location>
        <position position="57"/>
    </location>
</feature>
<feature type="glycosylation site" description="N-linked (GlcNAc...) asparagine" evidence="2">
    <location>
        <position position="117"/>
    </location>
</feature>
<feature type="glycosylation site" description="N-linked (GlcNAc...) asparagine" evidence="2">
    <location>
        <position position="131"/>
    </location>
</feature>
<feature type="glycosylation site" description="N-linked (GlcNAc...) asparagine" evidence="2">
    <location>
        <position position="158"/>
    </location>
</feature>
<feature type="glycosylation site" description="N-linked (GlcNAc...) asparagine" evidence="2">
    <location>
        <position position="253"/>
    </location>
</feature>
<feature type="glycosylation site" description="N-linked (GlcNAc...) asparagine" evidence="2">
    <location>
        <position position="306"/>
    </location>
</feature>
<feature type="glycosylation site" description="N-linked (GlcNAc...) asparagine" evidence="2">
    <location>
        <position position="343"/>
    </location>
</feature>
<feature type="glycosylation site" description="N-linked (GlcNAc...) asparagine" evidence="2">
    <location>
        <position position="430"/>
    </location>
</feature>
<feature type="glycosylation site" description="N-linked (GlcNAc...) asparagine" evidence="2">
    <location>
        <position position="461"/>
    </location>
</feature>
<comment type="function">
    <text evidence="4 5 8">FAD-linked oxidoreductase; part of the gene cluster that mediates the biosynthesis of pyranonigrins, a family of antioxidative compounds (PubMed:24106156, PubMed:26414728). The first step of pyranonigrins biosynthesis is performed by the hybrid PKS-NRPS synthetase that condenses 6 malonyl-CoA units to an acetyl starter unit, to form a 1,3,5-trioxotetradecane-6,8-dienyl-ACP (PubMed:24106156). The enoyl reductase (ER) domain of pynA is likely to be functional during the first two rounds of polyketide chain extension, to generate the saturated C-C bonds of the alkyl side chain (Probable). PynA subsequently forms the amide bond between the acyl chain and L-serine (PubMed:24106156, PubMed:26414728). Although pynA has a terminal reductase domain, it appears to require the thioesterase pynI for the release of the straight-chain intermediate from pynA via the formation of a tetramic acid pyranonigrin J (PubMed:26414728). The methyltransferase pynC then coverts pyranonigrin J to pyranonigrin I via N-methylation (PubMed:26414728). The FAD-dependent monooxygenase pynG catalyzes an epoxidation-mediated cyclization to form the dihydro-gamma-pyrone moiety, followed by pynD-catalyzed oxidation of the alcohol to the ketone and enolization to yield the characteristic tetramic acid-fused gamma-pyrone core of pyranonigrin H (PubMed:26414728). Pyranonigrin H is substrate of pynH for dehydration-mediated exo-methylene formation from the serine side chain to produce pyranonigrin E, before the oxidase pynE reduces the exo-methylene of pyranonigrin E into a pendant methyl to form pyranonigrin G (PubMed:26414728). The FAD-linked oxidoreductase pynB performs the reverse reaction and converts pyranonigrin G back to pyranonigrin E (PubMed:26414728).</text>
</comment>
<comment type="cofactor">
    <cofactor evidence="7">
        <name>FAD</name>
        <dbReference type="ChEBI" id="CHEBI:57692"/>
    </cofactor>
</comment>
<comment type="pathway">
    <text evidence="5">Secondary metabolite biosynthesis.</text>
</comment>
<comment type="induction">
    <text evidence="4">Expression is positively regulated by the cluster-specific transcription factor pynR.</text>
</comment>
<comment type="disruption phenotype">
    <text evidence="5">Leads to the accumulation of pyranonigrin G.</text>
</comment>
<comment type="similarity">
    <text evidence="7">Belongs to the oxygen-dependent FAD-linked oxidoreductase family.</text>
</comment>
<name>PYNB_ASPNC</name>
<evidence type="ECO:0000255" key="1"/>
<evidence type="ECO:0000255" key="2">
    <source>
        <dbReference type="PROSITE-ProRule" id="PRU00498"/>
    </source>
</evidence>
<evidence type="ECO:0000255" key="3">
    <source>
        <dbReference type="PROSITE-ProRule" id="PRU00718"/>
    </source>
</evidence>
<evidence type="ECO:0000269" key="4">
    <source>
    </source>
</evidence>
<evidence type="ECO:0000269" key="5">
    <source>
    </source>
</evidence>
<evidence type="ECO:0000303" key="6">
    <source>
    </source>
</evidence>
<evidence type="ECO:0000305" key="7"/>
<evidence type="ECO:0000305" key="8">
    <source>
    </source>
</evidence>
<reference key="1">
    <citation type="journal article" date="2007" name="Nat. Biotechnol.">
        <title>Genome sequencing and analysis of the versatile cell factory Aspergillus niger CBS 513.88.</title>
        <authorList>
            <person name="Pel H.J."/>
            <person name="de Winde J.H."/>
            <person name="Archer D.B."/>
            <person name="Dyer P.S."/>
            <person name="Hofmann G."/>
            <person name="Schaap P.J."/>
            <person name="Turner G."/>
            <person name="de Vries R.P."/>
            <person name="Albang R."/>
            <person name="Albermann K."/>
            <person name="Andersen M.R."/>
            <person name="Bendtsen J.D."/>
            <person name="Benen J.A.E."/>
            <person name="van den Berg M."/>
            <person name="Breestraat S."/>
            <person name="Caddick M.X."/>
            <person name="Contreras R."/>
            <person name="Cornell M."/>
            <person name="Coutinho P.M."/>
            <person name="Danchin E.G.J."/>
            <person name="Debets A.J.M."/>
            <person name="Dekker P."/>
            <person name="van Dijck P.W.M."/>
            <person name="van Dijk A."/>
            <person name="Dijkhuizen L."/>
            <person name="Driessen A.J.M."/>
            <person name="d'Enfert C."/>
            <person name="Geysens S."/>
            <person name="Goosen C."/>
            <person name="Groot G.S.P."/>
            <person name="de Groot P.W.J."/>
            <person name="Guillemette T."/>
            <person name="Henrissat B."/>
            <person name="Herweijer M."/>
            <person name="van den Hombergh J.P.T.W."/>
            <person name="van den Hondel C.A.M.J.J."/>
            <person name="van der Heijden R.T.J.M."/>
            <person name="van der Kaaij R.M."/>
            <person name="Klis F.M."/>
            <person name="Kools H.J."/>
            <person name="Kubicek C.P."/>
            <person name="van Kuyk P.A."/>
            <person name="Lauber J."/>
            <person name="Lu X."/>
            <person name="van der Maarel M.J.E.C."/>
            <person name="Meulenberg R."/>
            <person name="Menke H."/>
            <person name="Mortimer M.A."/>
            <person name="Nielsen J."/>
            <person name="Oliver S.G."/>
            <person name="Olsthoorn M."/>
            <person name="Pal K."/>
            <person name="van Peij N.N.M.E."/>
            <person name="Ram A.F.J."/>
            <person name="Rinas U."/>
            <person name="Roubos J.A."/>
            <person name="Sagt C.M.J."/>
            <person name="Schmoll M."/>
            <person name="Sun J."/>
            <person name="Ussery D."/>
            <person name="Varga J."/>
            <person name="Vervecken W."/>
            <person name="van de Vondervoort P.J.J."/>
            <person name="Wedler H."/>
            <person name="Woesten H.A.B."/>
            <person name="Zeng A.-P."/>
            <person name="van Ooyen A.J.J."/>
            <person name="Visser J."/>
            <person name="Stam H."/>
        </authorList>
    </citation>
    <scope>NUCLEOTIDE SEQUENCE [LARGE SCALE GENOMIC DNA]</scope>
    <source>
        <strain>ATCC MYA-4892 / CBS 513.88 / FGSC A1513</strain>
    </source>
</reference>
<reference key="2">
    <citation type="journal article" date="2013" name="ChemBioChem">
        <title>Pyranonigrin E: a PKS-NRPS hybrid metabolite from Aspergillus niger identified by genome mining.</title>
        <authorList>
            <person name="Awakawa T."/>
            <person name="Yang X.L."/>
            <person name="Wakimoto T."/>
            <person name="Abe I."/>
        </authorList>
    </citation>
    <scope>FUNCTION</scope>
    <scope>INDUCTION</scope>
</reference>
<reference key="3">
    <citation type="journal article" date="2015" name="Org. Lett.">
        <title>Elucidation of pyranonigrin biosynthetic pathway reveals a mode of tetramic acid, fused gamma-pyrone, and exo-methylene formation.</title>
        <authorList>
            <person name="Yamamoto T."/>
            <person name="Tsunematsu Y."/>
            <person name="Noguchi H."/>
            <person name="Hotta K."/>
            <person name="Watanabe K."/>
        </authorList>
    </citation>
    <scope>FUNCTION</scope>
    <scope>DISRUPTION PHENOTYPE</scope>
    <scope>CATALYTIC ACTIVITY</scope>
    <scope>PATHWAY</scope>
</reference>
<accession>A5ABH0</accession>
<dbReference type="EC" id="1.1.1.-" evidence="5"/>
<dbReference type="EMBL" id="AM270218">
    <property type="protein sequence ID" value="CAK48268.1"/>
    <property type="molecule type" value="Genomic_DNA"/>
</dbReference>
<dbReference type="RefSeq" id="XP_001394039.1">
    <property type="nucleotide sequence ID" value="XM_001394002.1"/>
</dbReference>
<dbReference type="SMR" id="A5ABH0"/>
<dbReference type="GlyCosmos" id="A5ABH0">
    <property type="glycosylation" value="10 sites, No reported glycans"/>
</dbReference>
<dbReference type="EnsemblFungi" id="CAK48268">
    <property type="protein sequence ID" value="CAK48268"/>
    <property type="gene ID" value="An11g00350"/>
</dbReference>
<dbReference type="GeneID" id="4984244"/>
<dbReference type="KEGG" id="ang:An11g00350"/>
<dbReference type="VEuPathDB" id="FungiDB:An11g00350"/>
<dbReference type="HOGENOM" id="CLU_018354_10_2_1"/>
<dbReference type="Proteomes" id="UP000006706">
    <property type="component" value="Chromosome 7R"/>
</dbReference>
<dbReference type="GO" id="GO:0071949">
    <property type="term" value="F:FAD binding"/>
    <property type="evidence" value="ECO:0007669"/>
    <property type="project" value="InterPro"/>
</dbReference>
<dbReference type="GO" id="GO:0016491">
    <property type="term" value="F:oxidoreductase activity"/>
    <property type="evidence" value="ECO:0007669"/>
    <property type="project" value="UniProtKB-KW"/>
</dbReference>
<dbReference type="GO" id="GO:0019748">
    <property type="term" value="P:secondary metabolic process"/>
    <property type="evidence" value="ECO:0000317"/>
    <property type="project" value="AspGD"/>
</dbReference>
<dbReference type="FunFam" id="3.30.465.10:FF:000061">
    <property type="entry name" value="Aspergillus niger contig An11c0010, genomic contig"/>
    <property type="match status" value="1"/>
</dbReference>
<dbReference type="Gene3D" id="3.30.465.10">
    <property type="match status" value="2"/>
</dbReference>
<dbReference type="Gene3D" id="3.40.462.20">
    <property type="match status" value="1"/>
</dbReference>
<dbReference type="InterPro" id="IPR012951">
    <property type="entry name" value="BBE"/>
</dbReference>
<dbReference type="InterPro" id="IPR016166">
    <property type="entry name" value="FAD-bd_PCMH"/>
</dbReference>
<dbReference type="InterPro" id="IPR036318">
    <property type="entry name" value="FAD-bd_PCMH-like_sf"/>
</dbReference>
<dbReference type="InterPro" id="IPR016169">
    <property type="entry name" value="FAD-bd_PCMH_sub2"/>
</dbReference>
<dbReference type="InterPro" id="IPR050416">
    <property type="entry name" value="FAD-linked_Oxidoreductase"/>
</dbReference>
<dbReference type="InterPro" id="IPR006094">
    <property type="entry name" value="Oxid_FAD_bind_N"/>
</dbReference>
<dbReference type="PANTHER" id="PTHR42973">
    <property type="entry name" value="BINDING OXIDOREDUCTASE, PUTATIVE (AFU_ORTHOLOGUE AFUA_1G17690)-RELATED"/>
    <property type="match status" value="1"/>
</dbReference>
<dbReference type="PANTHER" id="PTHR42973:SF39">
    <property type="entry name" value="FAD-BINDING PCMH-TYPE DOMAIN-CONTAINING PROTEIN"/>
    <property type="match status" value="1"/>
</dbReference>
<dbReference type="Pfam" id="PF08031">
    <property type="entry name" value="BBE"/>
    <property type="match status" value="1"/>
</dbReference>
<dbReference type="Pfam" id="PF01565">
    <property type="entry name" value="FAD_binding_4"/>
    <property type="match status" value="1"/>
</dbReference>
<dbReference type="SUPFAM" id="SSF56176">
    <property type="entry name" value="FAD-binding/transporter-associated domain-like"/>
    <property type="match status" value="1"/>
</dbReference>
<dbReference type="PROSITE" id="PS51387">
    <property type="entry name" value="FAD_PCMH"/>
    <property type="match status" value="1"/>
</dbReference>
<organism>
    <name type="scientific">Aspergillus niger (strain ATCC MYA-4892 / CBS 513.88 / FGSC A1513)</name>
    <dbReference type="NCBI Taxonomy" id="425011"/>
    <lineage>
        <taxon>Eukaryota</taxon>
        <taxon>Fungi</taxon>
        <taxon>Dikarya</taxon>
        <taxon>Ascomycota</taxon>
        <taxon>Pezizomycotina</taxon>
        <taxon>Eurotiomycetes</taxon>
        <taxon>Eurotiomycetidae</taxon>
        <taxon>Eurotiales</taxon>
        <taxon>Aspergillaceae</taxon>
        <taxon>Aspergillus</taxon>
        <taxon>Aspergillus subgen. Circumdati</taxon>
    </lineage>
</organism>
<protein>
    <recommendedName>
        <fullName evidence="6">FAD-linked oxidoreductase pynB</fullName>
        <ecNumber evidence="5">1.1.1.-</ecNumber>
    </recommendedName>
    <alternativeName>
        <fullName evidence="6">Pyranonigrin biosynthesis cluster protein B</fullName>
    </alternativeName>
</protein>